<proteinExistence type="inferred from homology"/>
<reference key="1">
    <citation type="journal article" date="2011" name="J. Bacteriol.">
        <title>Comparative genomics of 28 Salmonella enterica isolates: evidence for CRISPR-mediated adaptive sublineage evolution.</title>
        <authorList>
            <person name="Fricke W.F."/>
            <person name="Mammel M.K."/>
            <person name="McDermott P.F."/>
            <person name="Tartera C."/>
            <person name="White D.G."/>
            <person name="Leclerc J.E."/>
            <person name="Ravel J."/>
            <person name="Cebula T.A."/>
        </authorList>
    </citation>
    <scope>NUCLEOTIDE SEQUENCE [LARGE SCALE GENOMIC DNA]</scope>
    <source>
        <strain>SL476</strain>
    </source>
</reference>
<comment type="function">
    <text evidence="1">Binds to DNA and alters its conformation. May be involved in regulation of gene expression, nucleoid organization and DNA protection.</text>
</comment>
<comment type="subunit">
    <text evidence="1">Homodimer.</text>
</comment>
<comment type="subcellular location">
    <subcellularLocation>
        <location evidence="1">Cytoplasm</location>
        <location evidence="1">Nucleoid</location>
    </subcellularLocation>
</comment>
<comment type="similarity">
    <text evidence="1">Belongs to the YbaB/EbfC family.</text>
</comment>
<organism>
    <name type="scientific">Salmonella heidelberg (strain SL476)</name>
    <dbReference type="NCBI Taxonomy" id="454169"/>
    <lineage>
        <taxon>Bacteria</taxon>
        <taxon>Pseudomonadati</taxon>
        <taxon>Pseudomonadota</taxon>
        <taxon>Gammaproteobacteria</taxon>
        <taxon>Enterobacterales</taxon>
        <taxon>Enterobacteriaceae</taxon>
        <taxon>Salmonella</taxon>
    </lineage>
</organism>
<gene>
    <name evidence="1" type="primary">ybaB</name>
    <name type="ordered locus">SeHA_C0590</name>
</gene>
<name>YBAB_SALHS</name>
<evidence type="ECO:0000255" key="1">
    <source>
        <dbReference type="HAMAP-Rule" id="MF_00274"/>
    </source>
</evidence>
<keyword id="KW-0963">Cytoplasm</keyword>
<keyword id="KW-0238">DNA-binding</keyword>
<dbReference type="EMBL" id="CP001120">
    <property type="protein sequence ID" value="ACF66664.1"/>
    <property type="molecule type" value="Genomic_DNA"/>
</dbReference>
<dbReference type="RefSeq" id="WP_000467098.1">
    <property type="nucleotide sequence ID" value="NC_011083.1"/>
</dbReference>
<dbReference type="SMR" id="B4T9H8"/>
<dbReference type="KEGG" id="seh:SeHA_C0590"/>
<dbReference type="HOGENOM" id="CLU_140930_0_0_6"/>
<dbReference type="Proteomes" id="UP000001866">
    <property type="component" value="Chromosome"/>
</dbReference>
<dbReference type="GO" id="GO:0043590">
    <property type="term" value="C:bacterial nucleoid"/>
    <property type="evidence" value="ECO:0007669"/>
    <property type="project" value="UniProtKB-UniRule"/>
</dbReference>
<dbReference type="GO" id="GO:0005829">
    <property type="term" value="C:cytosol"/>
    <property type="evidence" value="ECO:0007669"/>
    <property type="project" value="TreeGrafter"/>
</dbReference>
<dbReference type="GO" id="GO:0003677">
    <property type="term" value="F:DNA binding"/>
    <property type="evidence" value="ECO:0007669"/>
    <property type="project" value="UniProtKB-UniRule"/>
</dbReference>
<dbReference type="FunFam" id="3.30.1310.10:FF:000001">
    <property type="entry name" value="Nucleoid-associated protein YbaB"/>
    <property type="match status" value="1"/>
</dbReference>
<dbReference type="Gene3D" id="3.30.1310.10">
    <property type="entry name" value="Nucleoid-associated protein YbaB-like domain"/>
    <property type="match status" value="1"/>
</dbReference>
<dbReference type="HAMAP" id="MF_00274">
    <property type="entry name" value="DNA_YbaB_EbfC"/>
    <property type="match status" value="1"/>
</dbReference>
<dbReference type="InterPro" id="IPR036894">
    <property type="entry name" value="YbaB-like_sf"/>
</dbReference>
<dbReference type="InterPro" id="IPR004401">
    <property type="entry name" value="YbaB/EbfC"/>
</dbReference>
<dbReference type="NCBIfam" id="TIGR00103">
    <property type="entry name" value="DNA_YbaB_EbfC"/>
    <property type="match status" value="1"/>
</dbReference>
<dbReference type="PANTHER" id="PTHR33449">
    <property type="entry name" value="NUCLEOID-ASSOCIATED PROTEIN YBAB"/>
    <property type="match status" value="1"/>
</dbReference>
<dbReference type="PANTHER" id="PTHR33449:SF1">
    <property type="entry name" value="NUCLEOID-ASSOCIATED PROTEIN YBAB"/>
    <property type="match status" value="1"/>
</dbReference>
<dbReference type="Pfam" id="PF02575">
    <property type="entry name" value="YbaB_DNA_bd"/>
    <property type="match status" value="1"/>
</dbReference>
<dbReference type="PIRSF" id="PIRSF004555">
    <property type="entry name" value="UCP004555"/>
    <property type="match status" value="1"/>
</dbReference>
<dbReference type="SUPFAM" id="SSF82607">
    <property type="entry name" value="YbaB-like"/>
    <property type="match status" value="1"/>
</dbReference>
<sequence>MFGKGGLGNLMKQAQQMQEKMQKMQEEIAQLEVTGESGAGLVKVTINGAHNCRRVEIDPSLLEDDKEMLEDLVAAAFNDAARRIEETQKEKMASVSSGMQLPPGFKMPF</sequence>
<accession>B4T9H8</accession>
<protein>
    <recommendedName>
        <fullName evidence="1">Nucleoid-associated protein YbaB</fullName>
    </recommendedName>
</protein>
<feature type="chain" id="PRO_1000114644" description="Nucleoid-associated protein YbaB">
    <location>
        <begin position="1"/>
        <end position="109"/>
    </location>
</feature>